<organism>
    <name type="scientific">Arabidopsis thaliana</name>
    <name type="common">Mouse-ear cress</name>
    <dbReference type="NCBI Taxonomy" id="3702"/>
    <lineage>
        <taxon>Eukaryota</taxon>
        <taxon>Viridiplantae</taxon>
        <taxon>Streptophyta</taxon>
        <taxon>Embryophyta</taxon>
        <taxon>Tracheophyta</taxon>
        <taxon>Spermatophyta</taxon>
        <taxon>Magnoliopsida</taxon>
        <taxon>eudicotyledons</taxon>
        <taxon>Gunneridae</taxon>
        <taxon>Pentapetalae</taxon>
        <taxon>rosids</taxon>
        <taxon>malvids</taxon>
        <taxon>Brassicales</taxon>
        <taxon>Brassicaceae</taxon>
        <taxon>Camelineae</taxon>
        <taxon>Arabidopsis</taxon>
    </lineage>
</organism>
<gene>
    <name evidence="7" type="primary">GTF2H2</name>
    <name evidence="8" type="synonym">P44</name>
    <name evidence="10" type="ordered locus">At1g05055</name>
    <name evidence="11" type="ORF">T7A14.8</name>
</gene>
<evidence type="ECO:0000250" key="1">
    <source>
        <dbReference type="UniProtKB" id="Q13888"/>
    </source>
</evidence>
<evidence type="ECO:0000255" key="2">
    <source>
        <dbReference type="PROSITE-ProRule" id="PRU00175"/>
    </source>
</evidence>
<evidence type="ECO:0000255" key="3">
    <source>
        <dbReference type="PROSITE-ProRule" id="PRU00219"/>
    </source>
</evidence>
<evidence type="ECO:0000256" key="4">
    <source>
        <dbReference type="SAM" id="MobiDB-lite"/>
    </source>
</evidence>
<evidence type="ECO:0000269" key="5">
    <source>
    </source>
</evidence>
<evidence type="ECO:0000303" key="6">
    <source>
    </source>
</evidence>
<evidence type="ECO:0000303" key="7">
    <source>
    </source>
</evidence>
<evidence type="ECO:0000305" key="8"/>
<evidence type="ECO:0000305" key="9">
    <source>
    </source>
</evidence>
<evidence type="ECO:0000312" key="10">
    <source>
        <dbReference type="Araport" id="AT1G05055"/>
    </source>
</evidence>
<evidence type="ECO:0000312" key="11">
    <source>
        <dbReference type="EMBL" id="AAC97995.1"/>
    </source>
</evidence>
<proteinExistence type="evidence at protein level"/>
<comment type="function">
    <text evidence="1 5">Component of the general transcription and DNA repair factor IIH (TFIIH) core complex, which is involved in general and transcription-coupled nucleotide excision repair (NER) of damaged DNA and, when complexed to CAK, in RNA transcription by RNA polymerase II. In NER, TFIIH acts by opening DNA around the lesion to allow the excision of the damaged oligonucleotide and its replacement by a new DNA fragment. In transcription, TFIIH has an essential role in transcription initiation. When the pre-initiation complex (PIC) has been established, TFIIH is required for promoter opening and promoter escape. Phosphorylation of the C-terminal tail (CTD) of the largest subunit of RNA polymerase II by the kinase module CAK controls the initiation of transcription (By similarity). Can restore UV resistance in the NER-deficient ssl1-1 yeast mutant (PubMed:16623910).</text>
</comment>
<comment type="subunit">
    <text evidence="1 5 9">Component of the 7-subunit TFIIH core complex composed of XPB, XPD, TFB1/GTF2H1, GTF2H2/P44, TFB4/GTF2H3, TFB2/GTF2H4 and TFB5/GTF2H5, which is active in NER. The core complex associates with the 3-subunit CDK-activating kinase (CAK) module composed of CYCH1/cyclin H1, CDKD and MAT1/At4g30820 to form the 10-subunit holoenzyme (holo-TFIIH) active in transcription (By similarity). Interacts with XPD (PubMed:16623910).</text>
</comment>
<comment type="subcellular location">
    <subcellularLocation>
        <location evidence="8">Nucleus</location>
    </subcellularLocation>
</comment>
<comment type="similarity">
    <text evidence="8">Belongs to the GTF2H2 family.</text>
</comment>
<feature type="chain" id="PRO_0000435434" description="General transcription factor IIH subunit 2">
    <location>
        <begin position="1"/>
        <end position="421"/>
    </location>
</feature>
<feature type="domain" description="VWFA" evidence="3">
    <location>
        <begin position="83"/>
        <end position="272"/>
    </location>
</feature>
<feature type="zinc finger region" description="RING-type" evidence="2">
    <location>
        <begin position="362"/>
        <end position="408"/>
    </location>
</feature>
<feature type="region of interest" description="Disordered" evidence="4">
    <location>
        <begin position="1"/>
        <end position="26"/>
    </location>
</feature>
<feature type="compositionally biased region" description="Acidic residues" evidence="4">
    <location>
        <begin position="11"/>
        <end position="24"/>
    </location>
</feature>
<name>TF2H2_ARATH</name>
<sequence length="421" mass="46978">MSNQRKRSNDEREEEDDEDAEGIGEWERAYVDDRSWEELQEDESGLLRPIDNSAIYHAQYRRRLRMLSAAAAGTRIQKGLIRYLYIVIDFSRAAAEMDFRPSRMAIMAKHVEAFIREFFDQNPLSQIGLVSIKNGVAHTLTDLGGSPETHIKALMGKLEALGDSSLQNALELVHEHLNQVPSYGHREVLILYSALCTCDPGDIMETIQKCKKSKLRCSVIGLSAEMFICKHLCQETGGLYSVAVDEVHLKDLLLEHAPPPPAIAEFAIANLIKMGFPQRAAEGSMAICSCHKEVKIGAGYMCPRCKARVCDLPTECTICGLTLVSSPHLARSYHHLFPIAPFDEVPALSSLNDNRRKLGKSCFGCQQSLIGAGNKPVPCVTCRKCKHYFCLDCDIYIHESLHNCPGCESIHRPKSVSLMEE</sequence>
<accession>Q9ZVN9</accession>
<protein>
    <recommendedName>
        <fullName evidence="8">General transcription factor IIH subunit 2</fullName>
        <shortName evidence="7">AtGTF2H2</shortName>
    </recommendedName>
    <alternativeName>
        <fullName evidence="8">TFIIH basal transcription factor complex p44 subunit</fullName>
        <shortName evidence="6">Atp44</shortName>
    </alternativeName>
</protein>
<keyword id="KW-0227">DNA damage</keyword>
<keyword id="KW-0234">DNA repair</keyword>
<keyword id="KW-0479">Metal-binding</keyword>
<keyword id="KW-0539">Nucleus</keyword>
<keyword id="KW-1185">Reference proteome</keyword>
<keyword id="KW-0804">Transcription</keyword>
<keyword id="KW-0805">Transcription regulation</keyword>
<keyword id="KW-0862">Zinc</keyword>
<keyword id="KW-0863">Zinc-finger</keyword>
<dbReference type="EMBL" id="AF499443">
    <property type="protein sequence ID" value="AAM90909.1"/>
    <property type="molecule type" value="mRNA"/>
</dbReference>
<dbReference type="EMBL" id="AC005322">
    <property type="protein sequence ID" value="AAC97995.1"/>
    <property type="molecule type" value="Genomic_DNA"/>
</dbReference>
<dbReference type="EMBL" id="CP002684">
    <property type="protein sequence ID" value="AEE27784.1"/>
    <property type="molecule type" value="Genomic_DNA"/>
</dbReference>
<dbReference type="EMBL" id="AK229479">
    <property type="protein sequence ID" value="BAF01337.1"/>
    <property type="molecule type" value="mRNA"/>
</dbReference>
<dbReference type="PIR" id="E86184">
    <property type="entry name" value="E86184"/>
</dbReference>
<dbReference type="RefSeq" id="NP_683275.2">
    <property type="nucleotide sequence ID" value="NM_148434.4"/>
</dbReference>
<dbReference type="SMR" id="Q9ZVN9"/>
<dbReference type="FunCoup" id="Q9ZVN9">
    <property type="interactions" value="3662"/>
</dbReference>
<dbReference type="STRING" id="3702.Q9ZVN9"/>
<dbReference type="PaxDb" id="3702-AT1G05055.1"/>
<dbReference type="ProteomicsDB" id="232755"/>
<dbReference type="EnsemblPlants" id="AT1G05055.1">
    <property type="protein sequence ID" value="AT1G05055.1"/>
    <property type="gene ID" value="AT1G05055"/>
</dbReference>
<dbReference type="GeneID" id="839332"/>
<dbReference type="Gramene" id="AT1G05055.1">
    <property type="protein sequence ID" value="AT1G05055.1"/>
    <property type="gene ID" value="AT1G05055"/>
</dbReference>
<dbReference type="KEGG" id="ath:AT1G05055"/>
<dbReference type="Araport" id="AT1G05055"/>
<dbReference type="TAIR" id="AT1G05055">
    <property type="gene designation" value="GTF2H2"/>
</dbReference>
<dbReference type="eggNOG" id="KOG2807">
    <property type="taxonomic scope" value="Eukaryota"/>
</dbReference>
<dbReference type="HOGENOM" id="CLU_028556_1_2_1"/>
<dbReference type="InParanoid" id="Q9ZVN9"/>
<dbReference type="OMA" id="INWVEVP"/>
<dbReference type="OrthoDB" id="284275at2759"/>
<dbReference type="PhylomeDB" id="Q9ZVN9"/>
<dbReference type="PRO" id="PR:Q9ZVN9"/>
<dbReference type="Proteomes" id="UP000006548">
    <property type="component" value="Chromosome 1"/>
</dbReference>
<dbReference type="ExpressionAtlas" id="Q9ZVN9">
    <property type="expression patterns" value="baseline and differential"/>
</dbReference>
<dbReference type="GO" id="GO:0000439">
    <property type="term" value="C:transcription factor TFIIH core complex"/>
    <property type="evidence" value="ECO:0007669"/>
    <property type="project" value="InterPro"/>
</dbReference>
<dbReference type="GO" id="GO:0005675">
    <property type="term" value="C:transcription factor TFIIH holo complex"/>
    <property type="evidence" value="ECO:0000316"/>
    <property type="project" value="TAIR"/>
</dbReference>
<dbReference type="GO" id="GO:0008270">
    <property type="term" value="F:zinc ion binding"/>
    <property type="evidence" value="ECO:0007669"/>
    <property type="project" value="UniProtKB-KW"/>
</dbReference>
<dbReference type="GO" id="GO:0006351">
    <property type="term" value="P:DNA-templated transcription"/>
    <property type="evidence" value="ECO:0007669"/>
    <property type="project" value="InterPro"/>
</dbReference>
<dbReference type="GO" id="GO:0006289">
    <property type="term" value="P:nucleotide-excision repair"/>
    <property type="evidence" value="ECO:0000316"/>
    <property type="project" value="TAIR"/>
</dbReference>
<dbReference type="GO" id="GO:0006357">
    <property type="term" value="P:regulation of transcription by RNA polymerase II"/>
    <property type="evidence" value="ECO:0000316"/>
    <property type="project" value="TAIR"/>
</dbReference>
<dbReference type="CDD" id="cd01453">
    <property type="entry name" value="vWA_transcription_factor_IIH_type"/>
    <property type="match status" value="1"/>
</dbReference>
<dbReference type="FunFam" id="3.30.40.10:FF:000449">
    <property type="entry name" value="General transcription factor IIH subunit"/>
    <property type="match status" value="1"/>
</dbReference>
<dbReference type="FunFam" id="3.40.50.410:FF:000015">
    <property type="entry name" value="General transcription factor IIH subunit 2"/>
    <property type="match status" value="1"/>
</dbReference>
<dbReference type="Gene3D" id="3.40.50.410">
    <property type="entry name" value="von Willebrand factor, type A domain"/>
    <property type="match status" value="1"/>
</dbReference>
<dbReference type="Gene3D" id="3.30.40.10">
    <property type="entry name" value="Zinc/RING finger domain, C3HC4 (zinc finger)"/>
    <property type="match status" value="1"/>
</dbReference>
<dbReference type="InterPro" id="IPR046349">
    <property type="entry name" value="C1-like_sf"/>
</dbReference>
<dbReference type="InterPro" id="IPR007198">
    <property type="entry name" value="Ssl1-like"/>
</dbReference>
<dbReference type="InterPro" id="IPR004595">
    <property type="entry name" value="TFIIH_C1-like_dom"/>
</dbReference>
<dbReference type="InterPro" id="IPR012170">
    <property type="entry name" value="TFIIH_SSL1/p44"/>
</dbReference>
<dbReference type="InterPro" id="IPR002035">
    <property type="entry name" value="VWF_A"/>
</dbReference>
<dbReference type="InterPro" id="IPR036465">
    <property type="entry name" value="vWFA_dom_sf"/>
</dbReference>
<dbReference type="InterPro" id="IPR013087">
    <property type="entry name" value="Znf_C2H2_type"/>
</dbReference>
<dbReference type="InterPro" id="IPR001841">
    <property type="entry name" value="Znf_RING"/>
</dbReference>
<dbReference type="InterPro" id="IPR013083">
    <property type="entry name" value="Znf_RING/FYVE/PHD"/>
</dbReference>
<dbReference type="NCBIfam" id="TIGR00622">
    <property type="entry name" value="ssl1"/>
    <property type="match status" value="1"/>
</dbReference>
<dbReference type="PANTHER" id="PTHR12695">
    <property type="entry name" value="GENERAL TRANSCRIPTION FACTOR IIH SUBUNIT 2"/>
    <property type="match status" value="1"/>
</dbReference>
<dbReference type="PANTHER" id="PTHR12695:SF2">
    <property type="entry name" value="GENERAL TRANSCRIPTION FACTOR IIH SUBUNIT 2-RELATED"/>
    <property type="match status" value="1"/>
</dbReference>
<dbReference type="Pfam" id="PF07975">
    <property type="entry name" value="C1_4"/>
    <property type="match status" value="1"/>
</dbReference>
<dbReference type="Pfam" id="PF04056">
    <property type="entry name" value="Ssl1"/>
    <property type="match status" value="1"/>
</dbReference>
<dbReference type="PIRSF" id="PIRSF015919">
    <property type="entry name" value="TFIIH_SSL1"/>
    <property type="match status" value="1"/>
</dbReference>
<dbReference type="SMART" id="SM01047">
    <property type="entry name" value="C1_4"/>
    <property type="match status" value="1"/>
</dbReference>
<dbReference type="SMART" id="SM00327">
    <property type="entry name" value="VWA"/>
    <property type="match status" value="1"/>
</dbReference>
<dbReference type="SUPFAM" id="SSF57889">
    <property type="entry name" value="Cysteine-rich domain"/>
    <property type="match status" value="1"/>
</dbReference>
<dbReference type="SUPFAM" id="SSF53300">
    <property type="entry name" value="vWA-like"/>
    <property type="match status" value="1"/>
</dbReference>
<dbReference type="PROSITE" id="PS50234">
    <property type="entry name" value="VWFA"/>
    <property type="match status" value="1"/>
</dbReference>
<dbReference type="PROSITE" id="PS50089">
    <property type="entry name" value="ZF_RING_2"/>
    <property type="match status" value="1"/>
</dbReference>
<reference key="1">
    <citation type="journal article" date="2006" name="Plant J.">
        <title>Arabidopsis homologue of human transcription factor IIH/nucleotide excision repair factor p44 can function in transcription and DNA repair and interacts with AtXPD.</title>
        <authorList>
            <person name="Vonarx E.J."/>
            <person name="Tabone E.K."/>
            <person name="Osmond M.J."/>
            <person name="Anderson H.J."/>
            <person name="Kunz B.A."/>
        </authorList>
    </citation>
    <scope>NUCLEOTIDE SEQUENCE [MRNA]</scope>
    <scope>FUNCTION</scope>
    <scope>INTERACTION WITH XPD</scope>
</reference>
<reference key="2">
    <citation type="journal article" date="2000" name="Nature">
        <title>Sequence and analysis of chromosome 1 of the plant Arabidopsis thaliana.</title>
        <authorList>
            <person name="Theologis A."/>
            <person name="Ecker J.R."/>
            <person name="Palm C.J."/>
            <person name="Federspiel N.A."/>
            <person name="Kaul S."/>
            <person name="White O."/>
            <person name="Alonso J."/>
            <person name="Altafi H."/>
            <person name="Araujo R."/>
            <person name="Bowman C.L."/>
            <person name="Brooks S.Y."/>
            <person name="Buehler E."/>
            <person name="Chan A."/>
            <person name="Chao Q."/>
            <person name="Chen H."/>
            <person name="Cheuk R.F."/>
            <person name="Chin C.W."/>
            <person name="Chung M.K."/>
            <person name="Conn L."/>
            <person name="Conway A.B."/>
            <person name="Conway A.R."/>
            <person name="Creasy T.H."/>
            <person name="Dewar K."/>
            <person name="Dunn P."/>
            <person name="Etgu P."/>
            <person name="Feldblyum T.V."/>
            <person name="Feng J.-D."/>
            <person name="Fong B."/>
            <person name="Fujii C.Y."/>
            <person name="Gill J.E."/>
            <person name="Goldsmith A.D."/>
            <person name="Haas B."/>
            <person name="Hansen N.F."/>
            <person name="Hughes B."/>
            <person name="Huizar L."/>
            <person name="Hunter J.L."/>
            <person name="Jenkins J."/>
            <person name="Johnson-Hopson C."/>
            <person name="Khan S."/>
            <person name="Khaykin E."/>
            <person name="Kim C.J."/>
            <person name="Koo H.L."/>
            <person name="Kremenetskaia I."/>
            <person name="Kurtz D.B."/>
            <person name="Kwan A."/>
            <person name="Lam B."/>
            <person name="Langin-Hooper S."/>
            <person name="Lee A."/>
            <person name="Lee J.M."/>
            <person name="Lenz C.A."/>
            <person name="Li J.H."/>
            <person name="Li Y.-P."/>
            <person name="Lin X."/>
            <person name="Liu S.X."/>
            <person name="Liu Z.A."/>
            <person name="Luros J.S."/>
            <person name="Maiti R."/>
            <person name="Marziali A."/>
            <person name="Militscher J."/>
            <person name="Miranda M."/>
            <person name="Nguyen M."/>
            <person name="Nierman W.C."/>
            <person name="Osborne B.I."/>
            <person name="Pai G."/>
            <person name="Peterson J."/>
            <person name="Pham P.K."/>
            <person name="Rizzo M."/>
            <person name="Rooney T."/>
            <person name="Rowley D."/>
            <person name="Sakano H."/>
            <person name="Salzberg S.L."/>
            <person name="Schwartz J.R."/>
            <person name="Shinn P."/>
            <person name="Southwick A.M."/>
            <person name="Sun H."/>
            <person name="Tallon L.J."/>
            <person name="Tambunga G."/>
            <person name="Toriumi M.J."/>
            <person name="Town C.D."/>
            <person name="Utterback T."/>
            <person name="Van Aken S."/>
            <person name="Vaysberg M."/>
            <person name="Vysotskaia V.S."/>
            <person name="Walker M."/>
            <person name="Wu D."/>
            <person name="Yu G."/>
            <person name="Fraser C.M."/>
            <person name="Venter J.C."/>
            <person name="Davis R.W."/>
        </authorList>
    </citation>
    <scope>NUCLEOTIDE SEQUENCE [LARGE SCALE GENOMIC DNA]</scope>
    <source>
        <strain>cv. Columbia</strain>
    </source>
</reference>
<reference key="3">
    <citation type="journal article" date="2017" name="Plant J.">
        <title>Araport11: a complete reannotation of the Arabidopsis thaliana reference genome.</title>
        <authorList>
            <person name="Cheng C.Y."/>
            <person name="Krishnakumar V."/>
            <person name="Chan A.P."/>
            <person name="Thibaud-Nissen F."/>
            <person name="Schobel S."/>
            <person name="Town C.D."/>
        </authorList>
    </citation>
    <scope>GENOME REANNOTATION</scope>
    <source>
        <strain>cv. Columbia</strain>
    </source>
</reference>
<reference key="4">
    <citation type="submission" date="2006-07" db="EMBL/GenBank/DDBJ databases">
        <title>Large-scale analysis of RIKEN Arabidopsis full-length (RAFL) cDNAs.</title>
        <authorList>
            <person name="Totoki Y."/>
            <person name="Seki M."/>
            <person name="Ishida J."/>
            <person name="Nakajima M."/>
            <person name="Enju A."/>
            <person name="Kamiya A."/>
            <person name="Narusaka M."/>
            <person name="Shin-i T."/>
            <person name="Nakagawa M."/>
            <person name="Sakamoto N."/>
            <person name="Oishi K."/>
            <person name="Kohara Y."/>
            <person name="Kobayashi M."/>
            <person name="Toyoda A."/>
            <person name="Sakaki Y."/>
            <person name="Sakurai T."/>
            <person name="Iida K."/>
            <person name="Akiyama K."/>
            <person name="Satou M."/>
            <person name="Toyoda T."/>
            <person name="Konagaya A."/>
            <person name="Carninci P."/>
            <person name="Kawai J."/>
            <person name="Hayashizaki Y."/>
            <person name="Shinozaki K."/>
        </authorList>
    </citation>
    <scope>NUCLEOTIDE SEQUENCE [LARGE SCALE MRNA]</scope>
    <source>
        <strain>cv. Columbia</strain>
    </source>
</reference>
<reference key="5">
    <citation type="journal article" date="2005" name="Environ. Mol. Mutagen.">
        <title>Components of nucleotide excision repair and DNA damage tolerance in Arabidopsis thaliana.</title>
        <authorList>
            <person name="Kunz B.A."/>
            <person name="Anderson H.J."/>
            <person name="Osmond M.J."/>
            <person name="Vonarx E.J."/>
        </authorList>
    </citation>
    <scope>COMPONENT OF TFIIH CORE COMPLEX</scope>
    <scope>NOMENCLATURE</scope>
</reference>